<sequence length="378" mass="39353">MQSLKKYRRITVKIGSALLVDRASGLKRDWLDSLADDIAVLAQGGAEILVVSSGAIALGRTILGLGKRALKLEESQAAAAVGQIALAGAWSDALGRGALKSGQILLTLGDTEERRRYLNARATISTLLKMKAVPVINENDTVATSEIRYGDNDRLAARVATMMGADLLVLLSDIDGLYTAPPARDPKAKFIPVVDRITPDIEAMAGAAASELSRGGMRTKLDAGKIATAAGTAMIITSGTRLSPLMAIERGERATFFRPSANPVKGYKTWIAGQLEPAGRLTVDAGAVGALASGKSLLPAGVKLVSGNFSRGDTVAILSPDGREIARGLVAYDAADAVRIAGLKTAEIETVLGYEARSAMIHRDDLVVSHAGGDISGG</sequence>
<keyword id="KW-0028">Amino-acid biosynthesis</keyword>
<keyword id="KW-0067">ATP-binding</keyword>
<keyword id="KW-0963">Cytoplasm</keyword>
<keyword id="KW-0418">Kinase</keyword>
<keyword id="KW-0547">Nucleotide-binding</keyword>
<keyword id="KW-0641">Proline biosynthesis</keyword>
<keyword id="KW-0808">Transferase</keyword>
<proteinExistence type="inferred from homology"/>
<dbReference type="EC" id="2.7.2.11" evidence="1"/>
<dbReference type="EMBL" id="BA000012">
    <property type="protein sequence ID" value="BAB50773.1"/>
    <property type="molecule type" value="Genomic_DNA"/>
</dbReference>
<dbReference type="SMR" id="Q98EZ4"/>
<dbReference type="KEGG" id="mlo:mll4011"/>
<dbReference type="eggNOG" id="COG0263">
    <property type="taxonomic scope" value="Bacteria"/>
</dbReference>
<dbReference type="HOGENOM" id="CLU_025400_2_0_5"/>
<dbReference type="UniPathway" id="UPA00098">
    <property type="reaction ID" value="UER00359"/>
</dbReference>
<dbReference type="Proteomes" id="UP000000552">
    <property type="component" value="Chromosome"/>
</dbReference>
<dbReference type="GO" id="GO:0005829">
    <property type="term" value="C:cytosol"/>
    <property type="evidence" value="ECO:0007669"/>
    <property type="project" value="TreeGrafter"/>
</dbReference>
<dbReference type="GO" id="GO:0005524">
    <property type="term" value="F:ATP binding"/>
    <property type="evidence" value="ECO:0007669"/>
    <property type="project" value="UniProtKB-KW"/>
</dbReference>
<dbReference type="GO" id="GO:0004349">
    <property type="term" value="F:glutamate 5-kinase activity"/>
    <property type="evidence" value="ECO:0007669"/>
    <property type="project" value="UniProtKB-UniRule"/>
</dbReference>
<dbReference type="GO" id="GO:0003723">
    <property type="term" value="F:RNA binding"/>
    <property type="evidence" value="ECO:0007669"/>
    <property type="project" value="InterPro"/>
</dbReference>
<dbReference type="GO" id="GO:0055129">
    <property type="term" value="P:L-proline biosynthetic process"/>
    <property type="evidence" value="ECO:0007669"/>
    <property type="project" value="UniProtKB-UniRule"/>
</dbReference>
<dbReference type="CDD" id="cd04242">
    <property type="entry name" value="AAK_G5K_ProB"/>
    <property type="match status" value="1"/>
</dbReference>
<dbReference type="CDD" id="cd21157">
    <property type="entry name" value="PUA_G5K"/>
    <property type="match status" value="1"/>
</dbReference>
<dbReference type="FunFam" id="2.30.130.10:FF:000007">
    <property type="entry name" value="Glutamate 5-kinase"/>
    <property type="match status" value="1"/>
</dbReference>
<dbReference type="FunFam" id="3.40.1160.10:FF:000018">
    <property type="entry name" value="Glutamate 5-kinase"/>
    <property type="match status" value="1"/>
</dbReference>
<dbReference type="Gene3D" id="3.40.1160.10">
    <property type="entry name" value="Acetylglutamate kinase-like"/>
    <property type="match status" value="1"/>
</dbReference>
<dbReference type="Gene3D" id="2.30.130.10">
    <property type="entry name" value="PUA domain"/>
    <property type="match status" value="1"/>
</dbReference>
<dbReference type="HAMAP" id="MF_00456">
    <property type="entry name" value="ProB"/>
    <property type="match status" value="1"/>
</dbReference>
<dbReference type="InterPro" id="IPR036393">
    <property type="entry name" value="AceGlu_kinase-like_sf"/>
</dbReference>
<dbReference type="InterPro" id="IPR001048">
    <property type="entry name" value="Asp/Glu/Uridylate_kinase"/>
</dbReference>
<dbReference type="InterPro" id="IPR041739">
    <property type="entry name" value="G5K_ProB"/>
</dbReference>
<dbReference type="InterPro" id="IPR001057">
    <property type="entry name" value="Glu/AcGlu_kinase"/>
</dbReference>
<dbReference type="InterPro" id="IPR011529">
    <property type="entry name" value="Glu_5kinase"/>
</dbReference>
<dbReference type="InterPro" id="IPR005715">
    <property type="entry name" value="Glu_5kinase/COase_Synthase"/>
</dbReference>
<dbReference type="InterPro" id="IPR019797">
    <property type="entry name" value="Glutamate_5-kinase_CS"/>
</dbReference>
<dbReference type="InterPro" id="IPR002478">
    <property type="entry name" value="PUA"/>
</dbReference>
<dbReference type="InterPro" id="IPR015947">
    <property type="entry name" value="PUA-like_sf"/>
</dbReference>
<dbReference type="InterPro" id="IPR036974">
    <property type="entry name" value="PUA_sf"/>
</dbReference>
<dbReference type="NCBIfam" id="TIGR01027">
    <property type="entry name" value="proB"/>
    <property type="match status" value="1"/>
</dbReference>
<dbReference type="PANTHER" id="PTHR43654">
    <property type="entry name" value="GLUTAMATE 5-KINASE"/>
    <property type="match status" value="1"/>
</dbReference>
<dbReference type="PANTHER" id="PTHR43654:SF1">
    <property type="entry name" value="ISOPENTENYL PHOSPHATE KINASE"/>
    <property type="match status" value="1"/>
</dbReference>
<dbReference type="Pfam" id="PF00696">
    <property type="entry name" value="AA_kinase"/>
    <property type="match status" value="1"/>
</dbReference>
<dbReference type="Pfam" id="PF01472">
    <property type="entry name" value="PUA"/>
    <property type="match status" value="1"/>
</dbReference>
<dbReference type="PIRSF" id="PIRSF000729">
    <property type="entry name" value="GK"/>
    <property type="match status" value="1"/>
</dbReference>
<dbReference type="PRINTS" id="PR00474">
    <property type="entry name" value="GLU5KINASE"/>
</dbReference>
<dbReference type="SMART" id="SM00359">
    <property type="entry name" value="PUA"/>
    <property type="match status" value="1"/>
</dbReference>
<dbReference type="SUPFAM" id="SSF53633">
    <property type="entry name" value="Carbamate kinase-like"/>
    <property type="match status" value="1"/>
</dbReference>
<dbReference type="SUPFAM" id="SSF88697">
    <property type="entry name" value="PUA domain-like"/>
    <property type="match status" value="1"/>
</dbReference>
<dbReference type="PROSITE" id="PS00902">
    <property type="entry name" value="GLUTAMATE_5_KINASE"/>
    <property type="match status" value="1"/>
</dbReference>
<dbReference type="PROSITE" id="PS50890">
    <property type="entry name" value="PUA"/>
    <property type="match status" value="1"/>
</dbReference>
<feature type="chain" id="PRO_0000109713" description="Glutamate 5-kinase 1">
    <location>
        <begin position="1"/>
        <end position="378"/>
    </location>
</feature>
<feature type="domain" description="PUA" evidence="1">
    <location>
        <begin position="278"/>
        <end position="355"/>
    </location>
</feature>
<feature type="binding site" evidence="1">
    <location>
        <position position="13"/>
    </location>
    <ligand>
        <name>ATP</name>
        <dbReference type="ChEBI" id="CHEBI:30616"/>
    </ligand>
</feature>
<feature type="binding site" evidence="1">
    <location>
        <position position="53"/>
    </location>
    <ligand>
        <name>substrate</name>
    </ligand>
</feature>
<feature type="binding site" evidence="1">
    <location>
        <position position="140"/>
    </location>
    <ligand>
        <name>substrate</name>
    </ligand>
</feature>
<feature type="binding site" evidence="1">
    <location>
        <position position="152"/>
    </location>
    <ligand>
        <name>substrate</name>
    </ligand>
</feature>
<feature type="binding site" evidence="1">
    <location>
        <begin position="172"/>
        <end position="173"/>
    </location>
    <ligand>
        <name>ATP</name>
        <dbReference type="ChEBI" id="CHEBI:30616"/>
    </ligand>
</feature>
<gene>
    <name evidence="1" type="primary">proB1</name>
    <name type="ordered locus">mll4011</name>
</gene>
<protein>
    <recommendedName>
        <fullName evidence="1">Glutamate 5-kinase 1</fullName>
        <ecNumber evidence="1">2.7.2.11</ecNumber>
    </recommendedName>
    <alternativeName>
        <fullName evidence="1">Gamma-glutamyl kinase 1</fullName>
        <shortName evidence="1">GK 1</shortName>
    </alternativeName>
</protein>
<name>PROB1_RHILO</name>
<organism>
    <name type="scientific">Mesorhizobium japonicum (strain LMG 29417 / CECT 9101 / MAFF 303099)</name>
    <name type="common">Mesorhizobium loti (strain MAFF 303099)</name>
    <dbReference type="NCBI Taxonomy" id="266835"/>
    <lineage>
        <taxon>Bacteria</taxon>
        <taxon>Pseudomonadati</taxon>
        <taxon>Pseudomonadota</taxon>
        <taxon>Alphaproteobacteria</taxon>
        <taxon>Hyphomicrobiales</taxon>
        <taxon>Phyllobacteriaceae</taxon>
        <taxon>Mesorhizobium</taxon>
    </lineage>
</organism>
<evidence type="ECO:0000255" key="1">
    <source>
        <dbReference type="HAMAP-Rule" id="MF_00456"/>
    </source>
</evidence>
<reference key="1">
    <citation type="journal article" date="2000" name="DNA Res.">
        <title>Complete genome structure of the nitrogen-fixing symbiotic bacterium Mesorhizobium loti.</title>
        <authorList>
            <person name="Kaneko T."/>
            <person name="Nakamura Y."/>
            <person name="Sato S."/>
            <person name="Asamizu E."/>
            <person name="Kato T."/>
            <person name="Sasamoto S."/>
            <person name="Watanabe A."/>
            <person name="Idesawa K."/>
            <person name="Ishikawa A."/>
            <person name="Kawashima K."/>
            <person name="Kimura T."/>
            <person name="Kishida Y."/>
            <person name="Kiyokawa C."/>
            <person name="Kohara M."/>
            <person name="Matsumoto M."/>
            <person name="Matsuno A."/>
            <person name="Mochizuki Y."/>
            <person name="Nakayama S."/>
            <person name="Nakazaki N."/>
            <person name="Shimpo S."/>
            <person name="Sugimoto M."/>
            <person name="Takeuchi C."/>
            <person name="Yamada M."/>
            <person name="Tabata S."/>
        </authorList>
    </citation>
    <scope>NUCLEOTIDE SEQUENCE [LARGE SCALE GENOMIC DNA]</scope>
    <source>
        <strain>LMG 29417 / CECT 9101 / MAFF 303099</strain>
    </source>
</reference>
<accession>Q98EZ4</accession>
<comment type="function">
    <text evidence="1">Catalyzes the transfer of a phosphate group to glutamate to form L-glutamate 5-phosphate.</text>
</comment>
<comment type="catalytic activity">
    <reaction evidence="1">
        <text>L-glutamate + ATP = L-glutamyl 5-phosphate + ADP</text>
        <dbReference type="Rhea" id="RHEA:14877"/>
        <dbReference type="ChEBI" id="CHEBI:29985"/>
        <dbReference type="ChEBI" id="CHEBI:30616"/>
        <dbReference type="ChEBI" id="CHEBI:58274"/>
        <dbReference type="ChEBI" id="CHEBI:456216"/>
        <dbReference type="EC" id="2.7.2.11"/>
    </reaction>
</comment>
<comment type="pathway">
    <text evidence="1">Amino-acid biosynthesis; L-proline biosynthesis; L-glutamate 5-semialdehyde from L-glutamate: step 1/2.</text>
</comment>
<comment type="subcellular location">
    <subcellularLocation>
        <location evidence="1">Cytoplasm</location>
    </subcellularLocation>
</comment>
<comment type="similarity">
    <text evidence="1">Belongs to the glutamate 5-kinase family.</text>
</comment>